<proteinExistence type="inferred from homology"/>
<reference key="1">
    <citation type="submission" date="2006-12" db="EMBL/GenBank/DDBJ databases">
        <title>Complete sequence of chromosome of Mycobacterium sp. KMS.</title>
        <authorList>
            <consortium name="US DOE Joint Genome Institute"/>
            <person name="Copeland A."/>
            <person name="Lucas S."/>
            <person name="Lapidus A."/>
            <person name="Barry K."/>
            <person name="Detter J.C."/>
            <person name="Glavina del Rio T."/>
            <person name="Hammon N."/>
            <person name="Israni S."/>
            <person name="Dalin E."/>
            <person name="Tice H."/>
            <person name="Pitluck S."/>
            <person name="Kiss H."/>
            <person name="Brettin T."/>
            <person name="Bruce D."/>
            <person name="Han C."/>
            <person name="Tapia R."/>
            <person name="Gilna P."/>
            <person name="Schmutz J."/>
            <person name="Larimer F."/>
            <person name="Land M."/>
            <person name="Hauser L."/>
            <person name="Kyrpides N."/>
            <person name="Mikhailova N."/>
            <person name="Miller C.D."/>
            <person name="Richardson P."/>
        </authorList>
    </citation>
    <scope>NUCLEOTIDE SEQUENCE [LARGE SCALE GENOMIC DNA]</scope>
    <source>
        <strain>KMS</strain>
    </source>
</reference>
<dbReference type="EC" id="2.1.1.-"/>
<dbReference type="EMBL" id="CP000518">
    <property type="protein sequence ID" value="ABL89596.1"/>
    <property type="molecule type" value="Genomic_DNA"/>
</dbReference>
<dbReference type="SMR" id="A1U9T8"/>
<dbReference type="STRING" id="189918.Mkms_0379"/>
<dbReference type="KEGG" id="mkm:Mkms_0379"/>
<dbReference type="HOGENOM" id="CLU_056160_2_1_11"/>
<dbReference type="OrthoDB" id="9806164at2"/>
<dbReference type="GO" id="GO:0008168">
    <property type="term" value="F:methyltransferase activity"/>
    <property type="evidence" value="ECO:0007669"/>
    <property type="project" value="UniProtKB-KW"/>
</dbReference>
<dbReference type="GO" id="GO:0032259">
    <property type="term" value="P:methylation"/>
    <property type="evidence" value="ECO:0007669"/>
    <property type="project" value="UniProtKB-KW"/>
</dbReference>
<dbReference type="FunFam" id="3.40.50.150:FF:000152">
    <property type="entry name" value="S-adenosyl-L-methionine-dependent methyltransferase"/>
    <property type="match status" value="1"/>
</dbReference>
<dbReference type="Gene3D" id="3.40.50.150">
    <property type="entry name" value="Vaccinia Virus protein VP39"/>
    <property type="match status" value="1"/>
</dbReference>
<dbReference type="InterPro" id="IPR007213">
    <property type="entry name" value="Ppm1/Ppm2/Tcmp"/>
</dbReference>
<dbReference type="InterPro" id="IPR029063">
    <property type="entry name" value="SAM-dependent_MTases_sf"/>
</dbReference>
<dbReference type="InterPro" id="IPR011610">
    <property type="entry name" value="SAM_mthyl_Trfase_ML2640-like"/>
</dbReference>
<dbReference type="NCBIfam" id="TIGR00027">
    <property type="entry name" value="mthyl_TIGR00027"/>
    <property type="match status" value="1"/>
</dbReference>
<dbReference type="PANTHER" id="PTHR43619">
    <property type="entry name" value="S-ADENOSYL-L-METHIONINE-DEPENDENT METHYLTRANSFERASE YKTD-RELATED"/>
    <property type="match status" value="1"/>
</dbReference>
<dbReference type="PANTHER" id="PTHR43619:SF2">
    <property type="entry name" value="S-ADENOSYL-L-METHIONINE-DEPENDENT METHYLTRANSFERASES SUPERFAMILY PROTEIN"/>
    <property type="match status" value="1"/>
</dbReference>
<dbReference type="Pfam" id="PF04072">
    <property type="entry name" value="LCM"/>
    <property type="match status" value="1"/>
</dbReference>
<dbReference type="SUPFAM" id="SSF53335">
    <property type="entry name" value="S-adenosyl-L-methionine-dependent methyltransferases"/>
    <property type="match status" value="1"/>
</dbReference>
<protein>
    <recommendedName>
        <fullName>Putative S-adenosyl-L-methionine-dependent methyltransferase Mkms_0379</fullName>
        <ecNumber>2.1.1.-</ecNumber>
    </recommendedName>
</protein>
<evidence type="ECO:0000250" key="1"/>
<evidence type="ECO:0000305" key="2"/>
<sequence length="300" mass="32913">MRHDNDSWDITTSVGSTALFVAASRALEARKPDPLAVDPYAEVFCRAAGGDWAGLFDAGADPKPDHVLFSEFGEQFVNFQGARTRYFDAYFAAASDAGVRQVVLLAAGLDSRAYRLPWPDGTVVYELDQPRVLEFKREVLAERGEQPVAQRREVAVDLRDDWCAALTAAGFDPARPSAWLAEGLLMYLPATAQEALFSGIDALSAPRSWAAVEESVPMPAEVFAYKREEERAAGEEGTFFTLVYNERHAPAERWFGERGWAAEPTSLADYLTRVGRPAPVDDPEFGAMISAIRLVTATKG</sequence>
<organism>
    <name type="scientific">Mycobacterium sp. (strain KMS)</name>
    <dbReference type="NCBI Taxonomy" id="189918"/>
    <lineage>
        <taxon>Bacteria</taxon>
        <taxon>Bacillati</taxon>
        <taxon>Actinomycetota</taxon>
        <taxon>Actinomycetes</taxon>
        <taxon>Mycobacteriales</taxon>
        <taxon>Mycobacteriaceae</taxon>
        <taxon>Mycobacterium</taxon>
    </lineage>
</organism>
<comment type="function">
    <text evidence="1">Exhibits S-adenosyl-L-methionine-dependent methyltransferase activity.</text>
</comment>
<comment type="similarity">
    <text evidence="2">Belongs to the UPF0677 family.</text>
</comment>
<accession>A1U9T8</accession>
<feature type="chain" id="PRO_0000361213" description="Putative S-adenosyl-L-methionine-dependent methyltransferase Mkms_0379">
    <location>
        <begin position="1"/>
        <end position="300"/>
    </location>
</feature>
<feature type="binding site" evidence="1">
    <location>
        <position position="128"/>
    </location>
    <ligand>
        <name>S-adenosyl-L-methionine</name>
        <dbReference type="ChEBI" id="CHEBI:59789"/>
    </ligand>
</feature>
<feature type="binding site" evidence="1">
    <location>
        <begin position="157"/>
        <end position="158"/>
    </location>
    <ligand>
        <name>S-adenosyl-L-methionine</name>
        <dbReference type="ChEBI" id="CHEBI:59789"/>
    </ligand>
</feature>
<name>Y379_MYCSK</name>
<keyword id="KW-0489">Methyltransferase</keyword>
<keyword id="KW-0949">S-adenosyl-L-methionine</keyword>
<keyword id="KW-0808">Transferase</keyword>
<gene>
    <name type="ordered locus">Mkms_0379</name>
</gene>